<protein>
    <recommendedName>
        <fullName>A' protein</fullName>
    </recommendedName>
    <alternativeName>
        <fullName>GPA</fullName>
    </alternativeName>
</protein>
<organism>
    <name type="scientific">Enterobacteria phage S13</name>
    <name type="common">Bacteriophage S13</name>
    <dbReference type="NCBI Taxonomy" id="10844"/>
    <lineage>
        <taxon>Viruses</taxon>
        <taxon>Monodnaviria</taxon>
        <taxon>Sangervirae</taxon>
        <taxon>Phixviricota</taxon>
        <taxon>Malgrandaviricetes</taxon>
        <taxon>Petitvirales</taxon>
        <taxon>Microviridae</taxon>
        <taxon>Bullavirinae</taxon>
        <taxon>Sinsheimervirus</taxon>
        <taxon>Escherichia phage phiX174</taxon>
        <taxon>Escherichia phage phiX174</taxon>
    </lineage>
</organism>
<organismHost>
    <name type="scientific">Salmonella</name>
    <dbReference type="NCBI Taxonomy" id="590"/>
</organismHost>
<dbReference type="EMBL" id="M14428">
    <property type="protein sequence ID" value="AAA32581.1"/>
    <property type="molecule type" value="Genomic_DNA"/>
</dbReference>
<dbReference type="EMBL" id="M14428">
    <property type="protein sequence ID" value="AAA32582.1"/>
    <property type="molecule type" value="Genomic_DNA"/>
</dbReference>
<dbReference type="EMBL" id="M14428">
    <property type="protein sequence ID" value="AAA32583.1"/>
    <property type="molecule type" value="Genomic_DNA"/>
</dbReference>
<dbReference type="PIR" id="JS0450">
    <property type="entry name" value="JS0450"/>
</dbReference>
<dbReference type="Proteomes" id="UP000002129">
    <property type="component" value="Segment"/>
</dbReference>
<dbReference type="GO" id="GO:0003677">
    <property type="term" value="F:DNA binding"/>
    <property type="evidence" value="ECO:0007669"/>
    <property type="project" value="UniProtKB-KW"/>
</dbReference>
<dbReference type="GO" id="GO:0004519">
    <property type="term" value="F:endonuclease activity"/>
    <property type="evidence" value="ECO:0007669"/>
    <property type="project" value="UniProtKB-KW"/>
</dbReference>
<dbReference type="GO" id="GO:0008270">
    <property type="term" value="F:zinc ion binding"/>
    <property type="evidence" value="ECO:0007669"/>
    <property type="project" value="UniProtKB-KW"/>
</dbReference>
<dbReference type="GO" id="GO:0006260">
    <property type="term" value="P:DNA replication"/>
    <property type="evidence" value="ECO:0007669"/>
    <property type="project" value="UniProtKB-KW"/>
</dbReference>
<dbReference type="GO" id="GO:0039693">
    <property type="term" value="P:viral DNA genome replication"/>
    <property type="evidence" value="ECO:0007669"/>
    <property type="project" value="UniProtKB-KW"/>
</dbReference>
<dbReference type="InterPro" id="IPR008766">
    <property type="entry name" value="Replication_gene_A-like"/>
</dbReference>
<dbReference type="Pfam" id="PF05840">
    <property type="entry name" value="Phage_GPA"/>
    <property type="match status" value="1"/>
</dbReference>
<accession>P07928</accession>
<evidence type="ECO:0000250" key="1"/>
<evidence type="ECO:0000255" key="2"/>
<evidence type="ECO:0000305" key="3"/>
<comment type="function">
    <text>The A protein is a specific endonuclease that cleaves the viral strand of supertwisted, closed circular DNA at a unique site in the A gene. The A protein also causes relaxation of supertwisted DNA and forms a complex with viral DNA that has a discontinuity in gene A of the viral strand.</text>
</comment>
<comment type="function">
    <text>The A* protein binds to double-stranded DNA and prevents their hydrolysis by nucleases.</text>
</comment>
<comment type="alternative products">
    <event type="alternative initiation"/>
    <isoform>
        <id>P07928-1</id>
        <name>A'</name>
        <sequence type="displayed"/>
    </isoform>
    <isoform>
        <id>P07928-2</id>
        <name>A</name>
        <sequence type="described" ref="VSP_018675"/>
    </isoform>
    <isoform>
        <id>P07928-3</id>
        <name>A*</name>
        <sequence type="described" ref="VSP_018676"/>
    </isoform>
</comment>
<comment type="miscellaneous">
    <molecule>Isoform A</molecule>
    <text evidence="3">Produced by alternative initiation at Met-10 of isoform A'.</text>
</comment>
<comment type="miscellaneous">
    <molecule>Isoform A*</molecule>
    <text evidence="3">Produced by alternative initiation at Met-173 of isoform A'.</text>
</comment>
<proteinExistence type="predicted"/>
<name>VGA_BPS13</name>
<reference key="1">
    <citation type="journal article" date="1985" name="Gene">
        <title>Nucleotide sequence and genome organization of bacteriophage S13 DNA.</title>
        <authorList>
            <person name="Lau P.C.K."/>
            <person name="Spencer J.H."/>
        </authorList>
    </citation>
    <scope>NUCLEOTIDE SEQUENCE [GENOMIC DNA]</scope>
</reference>
<reference key="2">
    <citation type="journal article" date="1977" name="Nucleic Acids Res.">
        <title>The nucleotide sequence of two restriction fragments located in the gene AB region of bacteriophage S13.</title>
        <authorList>
            <person name="Grosveld F.G."/>
            <person name="Spencer J.H."/>
        </authorList>
    </citation>
    <scope>NUCLEOTIDE SEQUENCE [GENOMIC DNA] OF 269-333</scope>
</reference>
<gene>
    <name type="primary">A</name>
</gene>
<keyword id="KW-0024">Alternative initiation</keyword>
<keyword id="KW-0235">DNA replication</keyword>
<keyword id="KW-0238">DNA-binding</keyword>
<keyword id="KW-0255">Endonuclease</keyword>
<keyword id="KW-0378">Hydrolase</keyword>
<keyword id="KW-0479">Metal-binding</keyword>
<keyword id="KW-0540">Nuclease</keyword>
<keyword id="KW-1185">Reference proteome</keyword>
<keyword id="KW-1194">Viral DNA replication</keyword>
<keyword id="KW-0862">Zinc</keyword>
<keyword id="KW-0863">Zinc-finger</keyword>
<sequence length="522" mass="59882">MPPNFGGFFMVRSYYPSECHADYFDFERIEALKPAIEACGISTLSQSPMLGFHKQMDNRIKLLEEILSFRMQGVEFDNGDMYVYGHKAASDVRDEFVSVTEKLMDELAQCYNVLPQLDINNTIDHPPEGDEKWFLENEKTVTQFCRKLAAERPLKDIRDEYNYPKKKGIKDECSRLLEASTMKSRRGFTIQRLMNAMRQAHADGWFIVFDTLTLADDRLEAFYDNPNALRDYFRDIGRMVLAAERRKANDSHADCYQYFCVPEYGTANGRLHFHAVHFMRTLPSGSVDPNFGRRVRNRRQLNSLQNTWPYGYSMPIAVRYTQDAFSRSGWLWPVDAKGEPLKATSYMAVGFYVAKYVNKKSDMDLAAKGLGAKEWNNSLKTKLSLLPKKLFRIRMSRNFGMKMFTMTNLSMECLIQLTKLGYDATPFNQILKQNAKREMRLRLGKVTVADVLAAQPVTTNLLKFMRASIKMIGVSNLQSFIASMTQKLTLSDISDESKNYLDKAGITTACLRIKSKWTAGGK</sequence>
<feature type="chain" id="PRO_0000003319" description="A' protein">
    <location>
        <begin position="1"/>
        <end position="522"/>
    </location>
</feature>
<feature type="zinc finger region" evidence="2">
    <location>
        <begin position="255"/>
        <end position="277"/>
    </location>
</feature>
<feature type="active site" description="O-(5'-phospho-DNA)-tyrosine intermediate" evidence="1">
    <location>
        <position position="352"/>
    </location>
</feature>
<feature type="active site" description="O-(5'-phospho-DNA)-tyrosine intermediate" evidence="1">
    <location>
        <position position="356"/>
    </location>
</feature>
<feature type="splice variant" id="VSP_018676" description="In isoform A*." evidence="3">
    <location>
        <begin position="1"/>
        <end position="181"/>
    </location>
</feature>
<feature type="splice variant" id="VSP_018675" description="In isoform A." evidence="3">
    <location>
        <begin position="1"/>
        <end position="9"/>
    </location>
</feature>